<protein>
    <recommendedName>
        <fullName>Protein phosphatase 1J</fullName>
        <ecNumber>3.1.3.16</ecNumber>
    </recommendedName>
    <alternativeName>
        <fullName>Protein phosphatase 2C isoform zeta</fullName>
        <shortName>PP2C-zeta</shortName>
    </alternativeName>
</protein>
<accession>Q149T7</accession>
<accession>Q810X6</accession>
<accession>Q9D7H6</accession>
<name>PPM1J_MOUSE</name>
<dbReference type="EC" id="3.1.3.16"/>
<dbReference type="EMBL" id="AY184802">
    <property type="protein sequence ID" value="AAO72079.1"/>
    <property type="molecule type" value="mRNA"/>
</dbReference>
<dbReference type="EMBL" id="BC117498">
    <property type="protein sequence ID" value="AAI17499.1"/>
    <property type="molecule type" value="mRNA"/>
</dbReference>
<dbReference type="EMBL" id="BC121788">
    <property type="protein sequence ID" value="AAI21789.1"/>
    <property type="molecule type" value="mRNA"/>
</dbReference>
<dbReference type="EMBL" id="AK009235">
    <property type="protein sequence ID" value="BAB26156.1"/>
    <property type="status" value="ALT_INIT"/>
    <property type="molecule type" value="mRNA"/>
</dbReference>
<dbReference type="CCDS" id="CCDS17703.1"/>
<dbReference type="RefSeq" id="NP_082258.2">
    <property type="nucleotide sequence ID" value="NM_027982.2"/>
</dbReference>
<dbReference type="SMR" id="Q149T7"/>
<dbReference type="FunCoup" id="Q149T7">
    <property type="interactions" value="404"/>
</dbReference>
<dbReference type="STRING" id="10090.ENSMUSP00000002298"/>
<dbReference type="GlyGen" id="Q149T7">
    <property type="glycosylation" value="2 sites"/>
</dbReference>
<dbReference type="iPTMnet" id="Q149T7"/>
<dbReference type="PhosphoSitePlus" id="Q149T7"/>
<dbReference type="SwissPalm" id="Q149T7"/>
<dbReference type="PaxDb" id="10090-ENSMUSP00000002298"/>
<dbReference type="PeptideAtlas" id="Q149T7"/>
<dbReference type="ProteomicsDB" id="289382"/>
<dbReference type="Antibodypedia" id="33835">
    <property type="antibodies" value="87 antibodies from 22 providers"/>
</dbReference>
<dbReference type="DNASU" id="71887"/>
<dbReference type="Ensembl" id="ENSMUST00000002298.7">
    <property type="protein sequence ID" value="ENSMUSP00000002298.7"/>
    <property type="gene ID" value="ENSMUSG00000002228.8"/>
</dbReference>
<dbReference type="GeneID" id="71887"/>
<dbReference type="KEGG" id="mmu:71887"/>
<dbReference type="UCSC" id="uc008quk.1">
    <property type="organism name" value="mouse"/>
</dbReference>
<dbReference type="AGR" id="MGI:1919137"/>
<dbReference type="CTD" id="333926"/>
<dbReference type="MGI" id="MGI:1919137">
    <property type="gene designation" value="Ppm1j"/>
</dbReference>
<dbReference type="VEuPathDB" id="HostDB:ENSMUSG00000002228"/>
<dbReference type="eggNOG" id="KOG1323">
    <property type="taxonomic scope" value="Eukaryota"/>
</dbReference>
<dbReference type="GeneTree" id="ENSGT00940000160965"/>
<dbReference type="HOGENOM" id="CLU_029072_0_0_1"/>
<dbReference type="InParanoid" id="Q149T7"/>
<dbReference type="OMA" id="RDHSMTG"/>
<dbReference type="OrthoDB" id="10264738at2759"/>
<dbReference type="PhylomeDB" id="Q149T7"/>
<dbReference type="TreeFam" id="TF314700"/>
<dbReference type="BioGRID-ORCS" id="71887">
    <property type="hits" value="2 hits in 78 CRISPR screens"/>
</dbReference>
<dbReference type="PRO" id="PR:Q149T7"/>
<dbReference type="Proteomes" id="UP000000589">
    <property type="component" value="Chromosome 3"/>
</dbReference>
<dbReference type="RNAct" id="Q149T7">
    <property type="molecule type" value="protein"/>
</dbReference>
<dbReference type="Bgee" id="ENSMUSG00000002228">
    <property type="expression patterns" value="Expressed in lumbar dorsal root ganglion and 97 other cell types or tissues"/>
</dbReference>
<dbReference type="GO" id="GO:0004722">
    <property type="term" value="F:protein serine/threonine phosphatase activity"/>
    <property type="evidence" value="ECO:0000314"/>
    <property type="project" value="MGI"/>
</dbReference>
<dbReference type="CDD" id="cd00143">
    <property type="entry name" value="PP2Cc"/>
    <property type="match status" value="1"/>
</dbReference>
<dbReference type="Gene3D" id="3.60.40.10">
    <property type="entry name" value="PPM-type phosphatase domain"/>
    <property type="match status" value="1"/>
</dbReference>
<dbReference type="InterPro" id="IPR015655">
    <property type="entry name" value="PP2C"/>
</dbReference>
<dbReference type="InterPro" id="IPR036457">
    <property type="entry name" value="PPM-type-like_dom_sf"/>
</dbReference>
<dbReference type="InterPro" id="IPR001932">
    <property type="entry name" value="PPM-type_phosphatase-like_dom"/>
</dbReference>
<dbReference type="PANTHER" id="PTHR13832:SF305">
    <property type="entry name" value="PROTEIN PHOSPHATASE 1J"/>
    <property type="match status" value="1"/>
</dbReference>
<dbReference type="PANTHER" id="PTHR13832">
    <property type="entry name" value="PROTEIN PHOSPHATASE 2C"/>
    <property type="match status" value="1"/>
</dbReference>
<dbReference type="Pfam" id="PF00481">
    <property type="entry name" value="PP2C"/>
    <property type="match status" value="2"/>
</dbReference>
<dbReference type="SMART" id="SM00332">
    <property type="entry name" value="PP2Cc"/>
    <property type="match status" value="1"/>
</dbReference>
<dbReference type="SUPFAM" id="SSF81606">
    <property type="entry name" value="PP2C-like"/>
    <property type="match status" value="1"/>
</dbReference>
<dbReference type="PROSITE" id="PS51746">
    <property type="entry name" value="PPM_2"/>
    <property type="match status" value="1"/>
</dbReference>
<reference key="1">
    <citation type="journal article" date="2003" name="FEBS Lett.">
        <title>A novel protein phosphatase 2C family member (PP2Czeta) is able to associate with ubiquitin conjugating enzyme 9.</title>
        <authorList>
            <person name="Kashiwaba M."/>
            <person name="Katsura K."/>
            <person name="Ohnishi M."/>
            <person name="Sasaki M."/>
            <person name="Tanaka H."/>
            <person name="Nishimune Y."/>
            <person name="Kobayashi T."/>
            <person name="Tamura S."/>
        </authorList>
    </citation>
    <scope>NUCLEOTIDE SEQUENCE [MRNA]</scope>
    <scope>INTERACTION WITH UBE2I</scope>
    <scope>TISSUE SPECIFICITY</scope>
</reference>
<reference key="2">
    <citation type="journal article" date="2004" name="Genome Res.">
        <title>The status, quality, and expansion of the NIH full-length cDNA project: the Mammalian Gene Collection (MGC).</title>
        <authorList>
            <consortium name="The MGC Project Team"/>
        </authorList>
    </citation>
    <scope>NUCLEOTIDE SEQUENCE [LARGE SCALE MRNA]</scope>
</reference>
<reference key="3">
    <citation type="journal article" date="2005" name="Science">
        <title>The transcriptional landscape of the mammalian genome.</title>
        <authorList>
            <person name="Carninci P."/>
            <person name="Kasukawa T."/>
            <person name="Katayama S."/>
            <person name="Gough J."/>
            <person name="Frith M.C."/>
            <person name="Maeda N."/>
            <person name="Oyama R."/>
            <person name="Ravasi T."/>
            <person name="Lenhard B."/>
            <person name="Wells C."/>
            <person name="Kodzius R."/>
            <person name="Shimokawa K."/>
            <person name="Bajic V.B."/>
            <person name="Brenner S.E."/>
            <person name="Batalov S."/>
            <person name="Forrest A.R."/>
            <person name="Zavolan M."/>
            <person name="Davis M.J."/>
            <person name="Wilming L.G."/>
            <person name="Aidinis V."/>
            <person name="Allen J.E."/>
            <person name="Ambesi-Impiombato A."/>
            <person name="Apweiler R."/>
            <person name="Aturaliya R.N."/>
            <person name="Bailey T.L."/>
            <person name="Bansal M."/>
            <person name="Baxter L."/>
            <person name="Beisel K.W."/>
            <person name="Bersano T."/>
            <person name="Bono H."/>
            <person name="Chalk A.M."/>
            <person name="Chiu K.P."/>
            <person name="Choudhary V."/>
            <person name="Christoffels A."/>
            <person name="Clutterbuck D.R."/>
            <person name="Crowe M.L."/>
            <person name="Dalla E."/>
            <person name="Dalrymple B.P."/>
            <person name="de Bono B."/>
            <person name="Della Gatta G."/>
            <person name="di Bernardo D."/>
            <person name="Down T."/>
            <person name="Engstrom P."/>
            <person name="Fagiolini M."/>
            <person name="Faulkner G."/>
            <person name="Fletcher C.F."/>
            <person name="Fukushima T."/>
            <person name="Furuno M."/>
            <person name="Futaki S."/>
            <person name="Gariboldi M."/>
            <person name="Georgii-Hemming P."/>
            <person name="Gingeras T.R."/>
            <person name="Gojobori T."/>
            <person name="Green R.E."/>
            <person name="Gustincich S."/>
            <person name="Harbers M."/>
            <person name="Hayashi Y."/>
            <person name="Hensch T.K."/>
            <person name="Hirokawa N."/>
            <person name="Hill D."/>
            <person name="Huminiecki L."/>
            <person name="Iacono M."/>
            <person name="Ikeo K."/>
            <person name="Iwama A."/>
            <person name="Ishikawa T."/>
            <person name="Jakt M."/>
            <person name="Kanapin A."/>
            <person name="Katoh M."/>
            <person name="Kawasawa Y."/>
            <person name="Kelso J."/>
            <person name="Kitamura H."/>
            <person name="Kitano H."/>
            <person name="Kollias G."/>
            <person name="Krishnan S.P."/>
            <person name="Kruger A."/>
            <person name="Kummerfeld S.K."/>
            <person name="Kurochkin I.V."/>
            <person name="Lareau L.F."/>
            <person name="Lazarevic D."/>
            <person name="Lipovich L."/>
            <person name="Liu J."/>
            <person name="Liuni S."/>
            <person name="McWilliam S."/>
            <person name="Madan Babu M."/>
            <person name="Madera M."/>
            <person name="Marchionni L."/>
            <person name="Matsuda H."/>
            <person name="Matsuzawa S."/>
            <person name="Miki H."/>
            <person name="Mignone F."/>
            <person name="Miyake S."/>
            <person name="Morris K."/>
            <person name="Mottagui-Tabar S."/>
            <person name="Mulder N."/>
            <person name="Nakano N."/>
            <person name="Nakauchi H."/>
            <person name="Ng P."/>
            <person name="Nilsson R."/>
            <person name="Nishiguchi S."/>
            <person name="Nishikawa S."/>
            <person name="Nori F."/>
            <person name="Ohara O."/>
            <person name="Okazaki Y."/>
            <person name="Orlando V."/>
            <person name="Pang K.C."/>
            <person name="Pavan W.J."/>
            <person name="Pavesi G."/>
            <person name="Pesole G."/>
            <person name="Petrovsky N."/>
            <person name="Piazza S."/>
            <person name="Reed J."/>
            <person name="Reid J.F."/>
            <person name="Ring B.Z."/>
            <person name="Ringwald M."/>
            <person name="Rost B."/>
            <person name="Ruan Y."/>
            <person name="Salzberg S.L."/>
            <person name="Sandelin A."/>
            <person name="Schneider C."/>
            <person name="Schoenbach C."/>
            <person name="Sekiguchi K."/>
            <person name="Semple C.A."/>
            <person name="Seno S."/>
            <person name="Sessa L."/>
            <person name="Sheng Y."/>
            <person name="Shibata Y."/>
            <person name="Shimada H."/>
            <person name="Shimada K."/>
            <person name="Silva D."/>
            <person name="Sinclair B."/>
            <person name="Sperling S."/>
            <person name="Stupka E."/>
            <person name="Sugiura K."/>
            <person name="Sultana R."/>
            <person name="Takenaka Y."/>
            <person name="Taki K."/>
            <person name="Tammoja K."/>
            <person name="Tan S.L."/>
            <person name="Tang S."/>
            <person name="Taylor M.S."/>
            <person name="Tegner J."/>
            <person name="Teichmann S.A."/>
            <person name="Ueda H.R."/>
            <person name="van Nimwegen E."/>
            <person name="Verardo R."/>
            <person name="Wei C.L."/>
            <person name="Yagi K."/>
            <person name="Yamanishi H."/>
            <person name="Zabarovsky E."/>
            <person name="Zhu S."/>
            <person name="Zimmer A."/>
            <person name="Hide W."/>
            <person name="Bult C."/>
            <person name="Grimmond S.M."/>
            <person name="Teasdale R.D."/>
            <person name="Liu E.T."/>
            <person name="Brusic V."/>
            <person name="Quackenbush J."/>
            <person name="Wahlestedt C."/>
            <person name="Mattick J.S."/>
            <person name="Hume D.A."/>
            <person name="Kai C."/>
            <person name="Sasaki D."/>
            <person name="Tomaru Y."/>
            <person name="Fukuda S."/>
            <person name="Kanamori-Katayama M."/>
            <person name="Suzuki M."/>
            <person name="Aoki J."/>
            <person name="Arakawa T."/>
            <person name="Iida J."/>
            <person name="Imamura K."/>
            <person name="Itoh M."/>
            <person name="Kato T."/>
            <person name="Kawaji H."/>
            <person name="Kawagashira N."/>
            <person name="Kawashima T."/>
            <person name="Kojima M."/>
            <person name="Kondo S."/>
            <person name="Konno H."/>
            <person name="Nakano K."/>
            <person name="Ninomiya N."/>
            <person name="Nishio T."/>
            <person name="Okada M."/>
            <person name="Plessy C."/>
            <person name="Shibata K."/>
            <person name="Shiraki T."/>
            <person name="Suzuki S."/>
            <person name="Tagami M."/>
            <person name="Waki K."/>
            <person name="Watahiki A."/>
            <person name="Okamura-Oho Y."/>
            <person name="Suzuki H."/>
            <person name="Kawai J."/>
            <person name="Hayashizaki Y."/>
        </authorList>
    </citation>
    <scope>NUCLEOTIDE SEQUENCE [LARGE SCALE MRNA] OF 12-507</scope>
    <source>
        <strain>C57BL/6J</strain>
        <tissue>Tongue</tissue>
    </source>
</reference>
<reference key="4">
    <citation type="journal article" date="2009" name="Immunity">
        <title>The phagosomal proteome in interferon-gamma-activated macrophages.</title>
        <authorList>
            <person name="Trost M."/>
            <person name="English L."/>
            <person name="Lemieux S."/>
            <person name="Courcelles M."/>
            <person name="Desjardins M."/>
            <person name="Thibault P."/>
        </authorList>
    </citation>
    <scope>IDENTIFICATION BY MASS SPECTROMETRY [LARGE SCALE ANALYSIS]</scope>
</reference>
<reference key="5">
    <citation type="journal article" date="2010" name="Cell">
        <title>A tissue-specific atlas of mouse protein phosphorylation and expression.</title>
        <authorList>
            <person name="Huttlin E.L."/>
            <person name="Jedrychowski M.P."/>
            <person name="Elias J.E."/>
            <person name="Goswami T."/>
            <person name="Rad R."/>
            <person name="Beausoleil S.A."/>
            <person name="Villen J."/>
            <person name="Haas W."/>
            <person name="Sowa M.E."/>
            <person name="Gygi S.P."/>
        </authorList>
    </citation>
    <scope>PHOSPHORYLATION [LARGE SCALE ANALYSIS] AT THR-41</scope>
    <scope>IDENTIFICATION BY MASS SPECTROMETRY [LARGE SCALE ANALYSIS]</scope>
    <source>
        <tissue>Heart</tissue>
    </source>
</reference>
<gene>
    <name type="primary">Ppm1j</name>
    <name type="synonym">Ppp2cz</name>
</gene>
<keyword id="KW-0378">Hydrolase</keyword>
<keyword id="KW-0597">Phosphoprotein</keyword>
<keyword id="KW-0904">Protein phosphatase</keyword>
<keyword id="KW-1185">Reference proteome</keyword>
<feature type="chain" id="PRO_0000289059" description="Protein phosphatase 1J">
    <location>
        <begin position="1"/>
        <end position="507"/>
    </location>
</feature>
<feature type="domain" description="PPM-type phosphatase" evidence="2">
    <location>
        <begin position="103"/>
        <end position="499"/>
    </location>
</feature>
<feature type="region of interest" description="Disordered" evidence="3">
    <location>
        <begin position="1"/>
        <end position="102"/>
    </location>
</feature>
<feature type="region of interest" description="Disordered" evidence="3">
    <location>
        <begin position="197"/>
        <end position="220"/>
    </location>
</feature>
<feature type="compositionally biased region" description="Low complexity" evidence="3">
    <location>
        <begin position="14"/>
        <end position="23"/>
    </location>
</feature>
<feature type="compositionally biased region" description="Polar residues" evidence="3">
    <location>
        <begin position="59"/>
        <end position="73"/>
    </location>
</feature>
<feature type="compositionally biased region" description="Low complexity" evidence="3">
    <location>
        <begin position="199"/>
        <end position="212"/>
    </location>
</feature>
<feature type="modified residue" description="Phosphothreonine" evidence="6">
    <location>
        <position position="41"/>
    </location>
</feature>
<feature type="modified residue" description="Phosphoserine" evidence="1">
    <location>
        <position position="65"/>
    </location>
</feature>
<feature type="modified residue" description="Phosphoserine" evidence="1">
    <location>
        <position position="75"/>
    </location>
</feature>
<feature type="sequence conflict" description="In Ref. 1; AAO72079." evidence="5" ref="1">
    <original>V</original>
    <variation>A</variation>
    <location>
        <position position="5"/>
    </location>
</feature>
<feature type="sequence conflict" description="In Ref. 1; AAO72079." evidence="5" ref="1">
    <location>
        <begin position="61"/>
        <end position="62"/>
    </location>
</feature>
<feature type="sequence conflict" description="In Ref. 1; AAO72079." evidence="5" ref="1">
    <original>G</original>
    <variation>GET</variation>
    <location>
        <position position="78"/>
    </location>
</feature>
<evidence type="ECO:0000250" key="1">
    <source>
        <dbReference type="UniProtKB" id="Q5JR12"/>
    </source>
</evidence>
<evidence type="ECO:0000255" key="2">
    <source>
        <dbReference type="PROSITE-ProRule" id="PRU01082"/>
    </source>
</evidence>
<evidence type="ECO:0000256" key="3">
    <source>
        <dbReference type="SAM" id="MobiDB-lite"/>
    </source>
</evidence>
<evidence type="ECO:0000269" key="4">
    <source>
    </source>
</evidence>
<evidence type="ECO:0000305" key="5"/>
<evidence type="ECO:0007744" key="6">
    <source>
    </source>
</evidence>
<sequence length="507" mass="55550">MLNRVRSAVAHLVSSGGTSSQRSKSPDLPNATSAPPAAQETPKSSREKPGNQVGAPQKTAETTVSFSRPTFLQLSPGGLRRADDHAGRAVQSPPDTGRRLPWSTGYAEVINAGKSRHNEDQACCEVVYVESRRSRSVTGVSREPSHNQGFCFYYWGLFDGHAGGGAAEMASRLLHRHIREQLKDLVEILKDPLPPPLCLPSTPGTPGAPSPSQLVSPQSCWSPQKEVTHDSLIVGAIENAFHLMDEQMARERRGHQVEGGCCALVVLYLLGKMYVANAGDSRAIIVRNGEIIPMSREFTPETERQRLQLLGFLKPELLGSEFTHLEFPRRVQPKELGQRMLYRDQNMTGWAYKKIEVEDLRFPLVCGEGKKARVMATIGVTRGLGDHNLKVCSSTLSIKPFLSCFPEVRVYDLTQYEHCPDDVLVLGTDGLWDVTNDSEVAATVDRVLSSYEPNDPSRYTALAQALVLGARGIPRDRGWRLPNNKLGSGDDISVFVIPLGGPGSSYS</sequence>
<comment type="catalytic activity">
    <reaction>
        <text>O-phospho-L-seryl-[protein] + H2O = L-seryl-[protein] + phosphate</text>
        <dbReference type="Rhea" id="RHEA:20629"/>
        <dbReference type="Rhea" id="RHEA-COMP:9863"/>
        <dbReference type="Rhea" id="RHEA-COMP:11604"/>
        <dbReference type="ChEBI" id="CHEBI:15377"/>
        <dbReference type="ChEBI" id="CHEBI:29999"/>
        <dbReference type="ChEBI" id="CHEBI:43474"/>
        <dbReference type="ChEBI" id="CHEBI:83421"/>
        <dbReference type="EC" id="3.1.3.16"/>
    </reaction>
</comment>
<comment type="catalytic activity">
    <reaction>
        <text>O-phospho-L-threonyl-[protein] + H2O = L-threonyl-[protein] + phosphate</text>
        <dbReference type="Rhea" id="RHEA:47004"/>
        <dbReference type="Rhea" id="RHEA-COMP:11060"/>
        <dbReference type="Rhea" id="RHEA-COMP:11605"/>
        <dbReference type="ChEBI" id="CHEBI:15377"/>
        <dbReference type="ChEBI" id="CHEBI:30013"/>
        <dbReference type="ChEBI" id="CHEBI:43474"/>
        <dbReference type="ChEBI" id="CHEBI:61977"/>
        <dbReference type="EC" id="3.1.3.16"/>
    </reaction>
</comment>
<comment type="subunit">
    <text evidence="4">Interacts with UBE2I/UBC9.</text>
</comment>
<comment type="tissue specificity">
    <text evidence="4">Specifically expressed in the testicular germ cells.</text>
</comment>
<comment type="similarity">
    <text evidence="5">Belongs to the PP2C family.</text>
</comment>
<comment type="sequence caution" evidence="5">
    <conflict type="erroneous initiation">
        <sequence resource="EMBL-CDS" id="BAB26156"/>
    </conflict>
</comment>
<organism>
    <name type="scientific">Mus musculus</name>
    <name type="common">Mouse</name>
    <dbReference type="NCBI Taxonomy" id="10090"/>
    <lineage>
        <taxon>Eukaryota</taxon>
        <taxon>Metazoa</taxon>
        <taxon>Chordata</taxon>
        <taxon>Craniata</taxon>
        <taxon>Vertebrata</taxon>
        <taxon>Euteleostomi</taxon>
        <taxon>Mammalia</taxon>
        <taxon>Eutheria</taxon>
        <taxon>Euarchontoglires</taxon>
        <taxon>Glires</taxon>
        <taxon>Rodentia</taxon>
        <taxon>Myomorpha</taxon>
        <taxon>Muroidea</taxon>
        <taxon>Muridae</taxon>
        <taxon>Murinae</taxon>
        <taxon>Mus</taxon>
        <taxon>Mus</taxon>
    </lineage>
</organism>
<proteinExistence type="evidence at protein level"/>